<evidence type="ECO:0000255" key="1">
    <source>
        <dbReference type="HAMAP-Rule" id="MF_00580"/>
    </source>
</evidence>
<keyword id="KW-0143">Chaperone</keyword>
<keyword id="KW-0963">Cytoplasm</keyword>
<gene>
    <name evidence="1" type="primary">groES</name>
    <name evidence="1" type="synonym">groS</name>
    <name type="ordered locus">MM_1797</name>
</gene>
<comment type="function">
    <text evidence="1">Together with the chaperonin GroEL, plays an essential role in assisting protein folding. The GroEL-GroES system forms a nano-cage that allows encapsulation of the non-native substrate proteins and provides a physical environment optimized to promote and accelerate protein folding. GroES binds to the apical surface of the GroEL ring, thereby capping the opening of the GroEL channel.</text>
</comment>
<comment type="subunit">
    <text evidence="1">Heptamer of 7 subunits arranged in a ring. Interacts with the chaperonin GroEL.</text>
</comment>
<comment type="subcellular location">
    <subcellularLocation>
        <location evidence="1">Cytoplasm</location>
    </subcellularLocation>
</comment>
<comment type="similarity">
    <text evidence="1">Belongs to the GroES chaperonin family.</text>
</comment>
<name>CH10_METMA</name>
<reference key="1">
    <citation type="journal article" date="2002" name="J. Mol. Microbiol. Biotechnol.">
        <title>The genome of Methanosarcina mazei: evidence for lateral gene transfer between Bacteria and Archaea.</title>
        <authorList>
            <person name="Deppenmeier U."/>
            <person name="Johann A."/>
            <person name="Hartsch T."/>
            <person name="Merkl R."/>
            <person name="Schmitz R.A."/>
            <person name="Martinez-Arias R."/>
            <person name="Henne A."/>
            <person name="Wiezer A."/>
            <person name="Baeumer S."/>
            <person name="Jacobi C."/>
            <person name="Brueggemann H."/>
            <person name="Lienard T."/>
            <person name="Christmann A."/>
            <person name="Boemecke M."/>
            <person name="Steckel S."/>
            <person name="Bhattacharyya A."/>
            <person name="Lykidis A."/>
            <person name="Overbeek R."/>
            <person name="Klenk H.-P."/>
            <person name="Gunsalus R.P."/>
            <person name="Fritz H.-J."/>
            <person name="Gottschalk G."/>
        </authorList>
    </citation>
    <scope>NUCLEOTIDE SEQUENCE [LARGE SCALE GENOMIC DNA]</scope>
    <source>
        <strain>ATCC BAA-159 / DSM 3647 / Goe1 / Go1 / JCM 11833 / OCM 88</strain>
    </source>
</reference>
<proteinExistence type="inferred from homology"/>
<protein>
    <recommendedName>
        <fullName evidence="1">Co-chaperonin GroES</fullName>
    </recommendedName>
    <alternativeName>
        <fullName evidence="1">10 kDa chaperonin</fullName>
    </alternativeName>
    <alternativeName>
        <fullName evidence="1">Chaperonin-10</fullName>
        <shortName evidence="1">Cpn10</shortName>
    </alternativeName>
</protein>
<accession>Q8PW07</accession>
<dbReference type="EMBL" id="AE008384">
    <property type="protein sequence ID" value="AAM31493.1"/>
    <property type="molecule type" value="Genomic_DNA"/>
</dbReference>
<dbReference type="RefSeq" id="WP_011033735.1">
    <property type="nucleotide sequence ID" value="NC_003901.1"/>
</dbReference>
<dbReference type="SMR" id="Q8PW07"/>
<dbReference type="IntAct" id="Q8PW07">
    <property type="interactions" value="6"/>
</dbReference>
<dbReference type="MINT" id="Q8PW07"/>
<dbReference type="GeneID" id="82160851"/>
<dbReference type="KEGG" id="mma:MM_1797"/>
<dbReference type="PATRIC" id="fig|192952.21.peg.2076"/>
<dbReference type="eggNOG" id="arCOG05153">
    <property type="taxonomic scope" value="Archaea"/>
</dbReference>
<dbReference type="HOGENOM" id="CLU_132825_2_3_2"/>
<dbReference type="Proteomes" id="UP000000595">
    <property type="component" value="Chromosome"/>
</dbReference>
<dbReference type="GO" id="GO:0005737">
    <property type="term" value="C:cytoplasm"/>
    <property type="evidence" value="ECO:0007669"/>
    <property type="project" value="UniProtKB-SubCell"/>
</dbReference>
<dbReference type="GO" id="GO:0005524">
    <property type="term" value="F:ATP binding"/>
    <property type="evidence" value="ECO:0007669"/>
    <property type="project" value="InterPro"/>
</dbReference>
<dbReference type="GO" id="GO:0046872">
    <property type="term" value="F:metal ion binding"/>
    <property type="evidence" value="ECO:0007669"/>
    <property type="project" value="TreeGrafter"/>
</dbReference>
<dbReference type="GO" id="GO:0044183">
    <property type="term" value="F:protein folding chaperone"/>
    <property type="evidence" value="ECO:0007669"/>
    <property type="project" value="InterPro"/>
</dbReference>
<dbReference type="GO" id="GO:0051087">
    <property type="term" value="F:protein-folding chaperone binding"/>
    <property type="evidence" value="ECO:0007669"/>
    <property type="project" value="TreeGrafter"/>
</dbReference>
<dbReference type="GO" id="GO:0051082">
    <property type="term" value="F:unfolded protein binding"/>
    <property type="evidence" value="ECO:0007669"/>
    <property type="project" value="TreeGrafter"/>
</dbReference>
<dbReference type="GO" id="GO:0051085">
    <property type="term" value="P:chaperone cofactor-dependent protein refolding"/>
    <property type="evidence" value="ECO:0007669"/>
    <property type="project" value="TreeGrafter"/>
</dbReference>
<dbReference type="CDD" id="cd00320">
    <property type="entry name" value="cpn10"/>
    <property type="match status" value="1"/>
</dbReference>
<dbReference type="FunFam" id="2.30.33.40:FF:000001">
    <property type="entry name" value="10 kDa chaperonin"/>
    <property type="match status" value="1"/>
</dbReference>
<dbReference type="Gene3D" id="2.30.33.40">
    <property type="entry name" value="GroES chaperonin"/>
    <property type="match status" value="1"/>
</dbReference>
<dbReference type="HAMAP" id="MF_00580">
    <property type="entry name" value="CH10"/>
    <property type="match status" value="1"/>
</dbReference>
<dbReference type="InterPro" id="IPR020818">
    <property type="entry name" value="Chaperonin_GroES"/>
</dbReference>
<dbReference type="InterPro" id="IPR037124">
    <property type="entry name" value="Chaperonin_GroES_sf"/>
</dbReference>
<dbReference type="InterPro" id="IPR018369">
    <property type="entry name" value="Chaprnonin_Cpn10_CS"/>
</dbReference>
<dbReference type="InterPro" id="IPR011032">
    <property type="entry name" value="GroES-like_sf"/>
</dbReference>
<dbReference type="NCBIfam" id="NF001539">
    <property type="entry name" value="PRK00364.3-5"/>
    <property type="match status" value="1"/>
</dbReference>
<dbReference type="PANTHER" id="PTHR10772">
    <property type="entry name" value="10 KDA HEAT SHOCK PROTEIN"/>
    <property type="match status" value="1"/>
</dbReference>
<dbReference type="PANTHER" id="PTHR10772:SF63">
    <property type="entry name" value="20 KDA CHAPERONIN, CHLOROPLASTIC"/>
    <property type="match status" value="1"/>
</dbReference>
<dbReference type="Pfam" id="PF00166">
    <property type="entry name" value="Cpn10"/>
    <property type="match status" value="1"/>
</dbReference>
<dbReference type="PRINTS" id="PR00297">
    <property type="entry name" value="CHAPERONIN10"/>
</dbReference>
<dbReference type="SMART" id="SM00883">
    <property type="entry name" value="Cpn10"/>
    <property type="match status" value="1"/>
</dbReference>
<dbReference type="SUPFAM" id="SSF50129">
    <property type="entry name" value="GroES-like"/>
    <property type="match status" value="1"/>
</dbReference>
<dbReference type="PROSITE" id="PS00681">
    <property type="entry name" value="CHAPERONINS_CPN10"/>
    <property type="match status" value="1"/>
</dbReference>
<sequence length="92" mass="10463">MIVKPIGERVLLKHQKKEEVTKGGIYIPESARQEKKEGIVVAVGTFEDGKELPLKKDDHVIYGGYQADEIEIDDEKYIFVDFKDILATVVEE</sequence>
<feature type="chain" id="PRO_0000174914" description="Co-chaperonin GroES">
    <location>
        <begin position="1"/>
        <end position="92"/>
    </location>
</feature>
<organism>
    <name type="scientific">Methanosarcina mazei (strain ATCC BAA-159 / DSM 3647 / Goe1 / Go1 / JCM 11833 / OCM 88)</name>
    <name type="common">Methanosarcina frisia</name>
    <dbReference type="NCBI Taxonomy" id="192952"/>
    <lineage>
        <taxon>Archaea</taxon>
        <taxon>Methanobacteriati</taxon>
        <taxon>Methanobacteriota</taxon>
        <taxon>Stenosarchaea group</taxon>
        <taxon>Methanomicrobia</taxon>
        <taxon>Methanosarcinales</taxon>
        <taxon>Methanosarcinaceae</taxon>
        <taxon>Methanosarcina</taxon>
    </lineage>
</organism>